<name>RL28_STRP3</name>
<organism>
    <name type="scientific">Streptococcus pyogenes serotype M3 (strain ATCC BAA-595 / MGAS315)</name>
    <dbReference type="NCBI Taxonomy" id="198466"/>
    <lineage>
        <taxon>Bacteria</taxon>
        <taxon>Bacillati</taxon>
        <taxon>Bacillota</taxon>
        <taxon>Bacilli</taxon>
        <taxon>Lactobacillales</taxon>
        <taxon>Streptococcaceae</taxon>
        <taxon>Streptococcus</taxon>
    </lineage>
</organism>
<feature type="chain" id="PRO_0000178566" description="Large ribosomal subunit protein bL28">
    <location>
        <begin position="1"/>
        <end position="62"/>
    </location>
</feature>
<evidence type="ECO:0000305" key="1"/>
<comment type="similarity">
    <text evidence="1">Belongs to the bacterial ribosomal protein bL28 family.</text>
</comment>
<sequence length="62" mass="6928">MAKVCYFTGRKTVSGNNRSHAMNQTKRTVKPNLQKVTILVDGKPKKVWASARALKSGKVERI</sequence>
<gene>
    <name type="primary">rpmB</name>
    <name type="synonym">rl28</name>
    <name type="ordered locus">SpyM3_1629</name>
</gene>
<reference key="1">
    <citation type="journal article" date="2002" name="Proc. Natl. Acad. Sci. U.S.A.">
        <title>Genome sequence of a serotype M3 strain of group A Streptococcus: phage-encoded toxins, the high-virulence phenotype, and clone emergence.</title>
        <authorList>
            <person name="Beres S.B."/>
            <person name="Sylva G.L."/>
            <person name="Barbian K.D."/>
            <person name="Lei B."/>
            <person name="Hoff J.S."/>
            <person name="Mammarella N.D."/>
            <person name="Liu M.-Y."/>
            <person name="Smoot J.C."/>
            <person name="Porcella S.F."/>
            <person name="Parkins L.D."/>
            <person name="Campbell D.S."/>
            <person name="Smith T.M."/>
            <person name="McCormick J.K."/>
            <person name="Leung D.Y.M."/>
            <person name="Schlievert P.M."/>
            <person name="Musser J.M."/>
        </authorList>
    </citation>
    <scope>NUCLEOTIDE SEQUENCE [LARGE SCALE GENOMIC DNA]</scope>
    <source>
        <strain>ATCC BAA-595 / MGAS315</strain>
    </source>
</reference>
<dbReference type="EMBL" id="AE014074">
    <property type="protein sequence ID" value="AAM80236.1"/>
    <property type="molecule type" value="Genomic_DNA"/>
</dbReference>
<dbReference type="RefSeq" id="WP_002982870.1">
    <property type="nucleotide sequence ID" value="NC_004070.1"/>
</dbReference>
<dbReference type="SMR" id="P0DE30"/>
<dbReference type="GeneID" id="83705580"/>
<dbReference type="KEGG" id="spg:SpyM3_1629"/>
<dbReference type="HOGENOM" id="CLU_064548_7_1_9"/>
<dbReference type="Proteomes" id="UP000000564">
    <property type="component" value="Chromosome"/>
</dbReference>
<dbReference type="GO" id="GO:1990904">
    <property type="term" value="C:ribonucleoprotein complex"/>
    <property type="evidence" value="ECO:0007669"/>
    <property type="project" value="UniProtKB-KW"/>
</dbReference>
<dbReference type="GO" id="GO:0005840">
    <property type="term" value="C:ribosome"/>
    <property type="evidence" value="ECO:0007669"/>
    <property type="project" value="UniProtKB-KW"/>
</dbReference>
<dbReference type="GO" id="GO:0003735">
    <property type="term" value="F:structural constituent of ribosome"/>
    <property type="evidence" value="ECO:0007669"/>
    <property type="project" value="InterPro"/>
</dbReference>
<dbReference type="GO" id="GO:0006412">
    <property type="term" value="P:translation"/>
    <property type="evidence" value="ECO:0007669"/>
    <property type="project" value="UniProtKB-UniRule"/>
</dbReference>
<dbReference type="Gene3D" id="2.30.170.40">
    <property type="entry name" value="Ribosomal protein L28/L24"/>
    <property type="match status" value="1"/>
</dbReference>
<dbReference type="HAMAP" id="MF_00373">
    <property type="entry name" value="Ribosomal_bL28"/>
    <property type="match status" value="1"/>
</dbReference>
<dbReference type="InterPro" id="IPR050096">
    <property type="entry name" value="Bacterial_rp_bL28"/>
</dbReference>
<dbReference type="InterPro" id="IPR026569">
    <property type="entry name" value="Ribosomal_bL28"/>
</dbReference>
<dbReference type="InterPro" id="IPR034704">
    <property type="entry name" value="Ribosomal_bL28/bL31-like_sf"/>
</dbReference>
<dbReference type="InterPro" id="IPR001383">
    <property type="entry name" value="Ribosomal_bL28_bact-type"/>
</dbReference>
<dbReference type="InterPro" id="IPR037147">
    <property type="entry name" value="Ribosomal_bL28_sf"/>
</dbReference>
<dbReference type="NCBIfam" id="TIGR00009">
    <property type="entry name" value="L28"/>
    <property type="match status" value="1"/>
</dbReference>
<dbReference type="PANTHER" id="PTHR39080">
    <property type="entry name" value="50S RIBOSOMAL PROTEIN L28"/>
    <property type="match status" value="1"/>
</dbReference>
<dbReference type="PANTHER" id="PTHR39080:SF1">
    <property type="entry name" value="LARGE RIBOSOMAL SUBUNIT PROTEIN BL28A"/>
    <property type="match status" value="1"/>
</dbReference>
<dbReference type="Pfam" id="PF00830">
    <property type="entry name" value="Ribosomal_L28"/>
    <property type="match status" value="1"/>
</dbReference>
<dbReference type="SUPFAM" id="SSF143800">
    <property type="entry name" value="L28p-like"/>
    <property type="match status" value="1"/>
</dbReference>
<protein>
    <recommendedName>
        <fullName evidence="1">Large ribosomal subunit protein bL28</fullName>
    </recommendedName>
    <alternativeName>
        <fullName>50S ribosomal protein L28</fullName>
    </alternativeName>
</protein>
<accession>P0DE30</accession>
<accession>P58087</accession>
<accession>P66158</accession>
<keyword id="KW-0687">Ribonucleoprotein</keyword>
<keyword id="KW-0689">Ribosomal protein</keyword>
<proteinExistence type="inferred from homology"/>